<feature type="chain" id="PRO_0000452384" description="Nezukol synthase KSL3">
    <location>
        <begin position="1"/>
        <end position="782"/>
    </location>
</feature>
<feature type="short sequence motif" description="DDXXD motif" evidence="6">
    <location>
        <begin position="529"/>
        <end position="533"/>
    </location>
</feature>
<feature type="binding site" evidence="1">
    <location>
        <position position="529"/>
    </location>
    <ligand>
        <name>Mg(2+)</name>
        <dbReference type="ChEBI" id="CHEBI:18420"/>
        <label>1</label>
    </ligand>
</feature>
<feature type="binding site" evidence="1">
    <location>
        <position position="529"/>
    </location>
    <ligand>
        <name>Mg(2+)</name>
        <dbReference type="ChEBI" id="CHEBI:18420"/>
        <label>2</label>
    </ligand>
</feature>
<feature type="binding site" evidence="1">
    <location>
        <position position="533"/>
    </location>
    <ligand>
        <name>Mg(2+)</name>
        <dbReference type="ChEBI" id="CHEBI:18420"/>
        <label>1</label>
    </ligand>
</feature>
<feature type="binding site" evidence="1">
    <location>
        <position position="533"/>
    </location>
    <ligand>
        <name>Mg(2+)</name>
        <dbReference type="ChEBI" id="CHEBI:18420"/>
        <label>2</label>
    </ligand>
</feature>
<feature type="binding site" evidence="1">
    <location>
        <position position="677"/>
    </location>
    <ligand>
        <name>Mg(2+)</name>
        <dbReference type="ChEBI" id="CHEBI:18420"/>
        <label>3</label>
    </ligand>
</feature>
<feature type="binding site" evidence="1">
    <location>
        <position position="685"/>
    </location>
    <ligand>
        <name>Mg(2+)</name>
        <dbReference type="ChEBI" id="CHEBI:18420"/>
        <label>3</label>
    </ligand>
</feature>
<feature type="sequence conflict" description="In Ref. 2; ARO38140." evidence="6" ref="2">
    <original>E</original>
    <variation>D</variation>
    <location>
        <position position="60"/>
    </location>
</feature>
<feature type="sequence conflict" description="In Ref. 2; ARO38140." evidence="6" ref="2">
    <original>S</original>
    <variation>T</variation>
    <location>
        <position position="112"/>
    </location>
</feature>
<feature type="sequence conflict" description="In Ref. 2; ARO38140." evidence="6" ref="2">
    <original>A</original>
    <variation>S</variation>
    <location>
        <position position="156"/>
    </location>
</feature>
<feature type="sequence conflict" description="In Ref. 2; ARO38140." evidence="6" ref="2">
    <original>A</original>
    <variation>P</variation>
    <location>
        <position position="191"/>
    </location>
</feature>
<feature type="sequence conflict" description="In Ref. 2; ARO38140." evidence="6" ref="2">
    <original>I</original>
    <variation>IR</variation>
    <location>
        <position position="197"/>
    </location>
</feature>
<feature type="sequence conflict" description="In Ref. 2; ARO38140." evidence="6" ref="2">
    <original>Q</original>
    <variation>E</variation>
    <location>
        <position position="381"/>
    </location>
</feature>
<feature type="sequence conflict" description="In Ref. 2; ARO38140." evidence="6" ref="2">
    <original>M</original>
    <variation>K</variation>
    <location>
        <position position="407"/>
    </location>
</feature>
<feature type="sequence conflict" description="In Ref. 2; ARO38140." evidence="6" ref="2">
    <original>A</original>
    <variation>S</variation>
    <location>
        <position position="498"/>
    </location>
</feature>
<feature type="sequence conflict" description="In Ref. 2; ARO38140." evidence="6" ref="2">
    <original>IL</original>
    <variation>AI</variation>
    <location>
        <begin position="522"/>
        <end position="523"/>
    </location>
</feature>
<feature type="sequence conflict" description="In Ref. 2; ARO38140." evidence="6" ref="2">
    <location>
        <begin position="551"/>
        <end position="556"/>
    </location>
</feature>
<feature type="sequence conflict" description="In Ref. 2; ARO38140." evidence="6" ref="2">
    <original>E</original>
    <variation>V</variation>
    <location>
        <position position="603"/>
    </location>
</feature>
<feature type="sequence conflict" description="In Ref. 2; ARO38140." evidence="6" ref="2">
    <original>E</original>
    <variation>K</variation>
    <location>
        <position position="638"/>
    </location>
</feature>
<feature type="sequence conflict" description="In Ref. 2; ARO38140." evidence="6" ref="2">
    <original>N</original>
    <variation>S</variation>
    <location>
        <position position="670"/>
    </location>
</feature>
<feature type="sequence conflict" description="In Ref. 2; ARO38140." evidence="6" ref="2">
    <original>V</original>
    <variation>A</variation>
    <location>
        <position position="698"/>
    </location>
</feature>
<feature type="sequence conflict" description="In Ref. 2; ARO38140." evidence="6" ref="2">
    <original>E</original>
    <variation>K</variation>
    <location>
        <position position="722"/>
    </location>
</feature>
<feature type="sequence conflict" description="In Ref. 2; ARO38140." evidence="6" ref="2">
    <original>G</original>
    <variation>D</variation>
    <location>
        <position position="775"/>
    </location>
</feature>
<gene>
    <name evidence="4" type="primary">KSL3</name>
    <name evidence="5" type="synonym">TPS2</name>
</gene>
<keyword id="KW-0456">Lyase</keyword>
<keyword id="KW-0460">Magnesium</keyword>
<keyword id="KW-0479">Metal-binding</keyword>
<organism>
    <name type="scientific">Isodon rubescens</name>
    <name type="common">Rabdosia rubescens</name>
    <dbReference type="NCBI Taxonomy" id="587669"/>
    <lineage>
        <taxon>Eukaryota</taxon>
        <taxon>Viridiplantae</taxon>
        <taxon>Streptophyta</taxon>
        <taxon>Embryophyta</taxon>
        <taxon>Tracheophyta</taxon>
        <taxon>Spermatophyta</taxon>
        <taxon>Magnoliopsida</taxon>
        <taxon>eudicotyledons</taxon>
        <taxon>Gunneridae</taxon>
        <taxon>Pentapetalae</taxon>
        <taxon>asterids</taxon>
        <taxon>lamiids</taxon>
        <taxon>Lamiales</taxon>
        <taxon>Lamiaceae</taxon>
        <taxon>Nepetoideae</taxon>
        <taxon>Ocimeae</taxon>
        <taxon>Isodoninae</taxon>
        <taxon>Isodon</taxon>
    </lineage>
</organism>
<sequence>MSTLKLIPFSTSIDKQFSGRTSILGGKCCLQIDGPKTTKKQSKILVEKIRERISNGKVVEISASAYDTAWVAMVPSREMSGRPSFPECLDWIVENQNPDGSWGLNPFLVKDSLSCTLACLLALRKWGLPNHLLHKGIEFIESNISRAATDDENQVAPIGFNIIFPAMISYAKELDLTLTLPPSSLNALLRARDSEMIRREGKWEYVGEGLGDSCNWNQIIQKHQSRNGSLFNSPATTAAAAIHCRDHKCFDYLISVVNKCNGWAPTVYPMDIYARLCMIDTLQRLGIDCHFRVELDAIFDEIYRNWQEREEEIFSDVTCQALAFRLLRVKGYDVSSDGLEEFVEQEGFFNSVSMQHSNVGTVLELYRASQTRINEEENTLQKIHAWTKPFLTQQLLNKTIRHKPLQMQVEYDLKNFYGTVDRFQHRRTIDLYDAQASQILKTAYRCSAIHNEDFIRFSVQNFKICRAEYQKELDEINKWYAYFGMDLLSKGRNACEQAYVVTAGLIADVELSMARISFAQVILLITVFDDVFDRYGTREEALAVIHLIKEILTHYRWKAAPKECSQLVKTTFTALYDTVNETAAKAHALQGFCFKQQIISLWEELLECAVREKESLSGKNVSTLDEYLSFAPVTIGCELCVLTAVHFLGIQVSEEMLTSAEMLTLCWHGNVVCRLLNDLKTYSREREEKTVNSVSVQVGVSEEEAVAKVKEVLEYHRRKVVEMVYQSQGSNVPRECKELVWKTCKVAHCFYGYDGDEFSSPRDIVDDIKAMMFLGLPHLSTH</sequence>
<name>KSL3_ISORU</name>
<proteinExistence type="evidence at protein level"/>
<accession>A0A1X9ISH5</accession>
<accession>A0A1W6QDI4</accession>
<comment type="function">
    <text evidence="2 3">Involved in the biosynthesis of ent-kaurene diterpenoids natural products such as oridonin, miltiradiene, eriocalyxin B and nezukol, known to exhibit antitumor, anti-inflammatory and antibacterial activities (PubMed:28381502, PubMed:28445526). Catalyzes the conversion of (+)-copalyl diphosphate ((+)-CPP) to nezukol and miltiradiene (PubMed:28381502, PubMed:28445526). The reaction mechanism proceeds via the ionization of the diphosphate group of (+)-CPP, followed by formation of an intermediary pimar-15-en-8-yl(+) carbocation and neutralization of the carbocation by water capture at C-8 to yield nezukol (PubMed:28445526). Can interact with ent-copalyl diphosphate (ent-CPP) but seems unable to use it as substrate (PubMed:28445526).</text>
</comment>
<comment type="catalytic activity">
    <reaction evidence="2">
        <text>(+)-copalyl diphosphate = miltiradiene + diphosphate</text>
        <dbReference type="Rhea" id="RHEA:33983"/>
        <dbReference type="ChEBI" id="CHEBI:33019"/>
        <dbReference type="ChEBI" id="CHEBI:58635"/>
        <dbReference type="ChEBI" id="CHEBI:65037"/>
        <dbReference type="EC" id="4.2.3.131"/>
    </reaction>
    <physiologicalReaction direction="left-to-right" evidence="2">
        <dbReference type="Rhea" id="RHEA:33984"/>
    </physiologicalReaction>
</comment>
<comment type="catalytic activity">
    <reaction evidence="3">
        <text>(+)-copalyl diphosphate + H2O = nezukol + diphosphate</text>
        <dbReference type="Rhea" id="RHEA:54376"/>
        <dbReference type="ChEBI" id="CHEBI:15377"/>
        <dbReference type="ChEBI" id="CHEBI:33019"/>
        <dbReference type="ChEBI" id="CHEBI:58635"/>
        <dbReference type="ChEBI" id="CHEBI:138166"/>
        <dbReference type="EC" id="4.2.3.183"/>
    </reaction>
    <physiologicalReaction direction="left-to-right" evidence="3">
        <dbReference type="Rhea" id="RHEA:54377"/>
    </physiologicalReaction>
</comment>
<comment type="cofactor">
    <cofactor evidence="1">
        <name>Mg(2+)</name>
        <dbReference type="ChEBI" id="CHEBI:18420"/>
    </cofactor>
    <text evidence="1">Binds 3 Mg(2+) ions per subunit.</text>
</comment>
<comment type="pathway">
    <text evidence="2">Secondary metabolite biosynthesis; terpenoid biosynthesis.</text>
</comment>
<comment type="tissue specificity">
    <text evidence="2 3">Highly expressed in leaves, and, at low levels, in stems, but barely in roots and flowers.</text>
</comment>
<comment type="domain">
    <text evidence="6">The Asp-Asp-Xaa-Xaa-Asp/Glu (DDXXD/E) motif is important for the catalytic activity, presumably through binding to Mg(2+).</text>
</comment>
<comment type="miscellaneous">
    <text evidence="2">Abietane diterpenoids (e.g. miltiradiene, abietatriene and ferruginol) accumulate specifically in the periderm of roots (PubMed:28381502). The ent-kaurene diterpenoid oridonin, main constituent of Isodon rubescens, accumulates in leaves (PubMed:28381502).</text>
</comment>
<comment type="similarity">
    <text evidence="6">Belongs to the terpene synthase family.</text>
</comment>
<protein>
    <recommendedName>
        <fullName evidence="5">Nezukol synthase KSL3</fullName>
        <ecNumber evidence="3">4.2.3.183</ecNumber>
    </recommendedName>
    <alternativeName>
        <fullName evidence="4">Kaurene synthase 3</fullName>
        <shortName evidence="4">IrKSL3</shortName>
    </alternativeName>
    <alternativeName>
        <fullName evidence="6">Miltiradiene synthase KSL3</fullName>
        <ecNumber evidence="2">4.2.3.131</ecNumber>
    </alternativeName>
    <alternativeName>
        <fullName evidence="5">Terpene synthase 2</fullName>
        <shortName evidence="5">IrTPS2</shortName>
    </alternativeName>
</protein>
<reference key="1">
    <citation type="journal article" date="2017" name="Plant Physiol.">
        <title>Functional diversification of kaurene synthase-like genes in Isodon rubescens.</title>
        <authorList>
            <person name="Jin B."/>
            <person name="Cui G."/>
            <person name="Guo J."/>
            <person name="Tang J."/>
            <person name="Duan L."/>
            <person name="Lin H."/>
            <person name="Shen Y."/>
            <person name="Chen T."/>
            <person name="Zhang H."/>
            <person name="Huang L."/>
        </authorList>
    </citation>
    <scope>NUCLEOTIDE SEQUENCE [MRNA]</scope>
    <scope>FUNCTION</scope>
    <scope>PATHWAY</scope>
    <scope>CATALYTIC ACTIVITY</scope>
    <scope>TISSUE SPECIFICITY</scope>
</reference>
<reference key="2">
    <citation type="journal article" date="2017" name="PLoS ONE">
        <title>Biosynthesis of the oxygenated diterpene nezukol in the medicinal plant Isodon rubescens is catalyzed by a pair of diterpene synthases.</title>
        <authorList>
            <person name="Pelot K.A."/>
            <person name="Hagelthorn L.M."/>
            <person name="Addison J.B."/>
            <person name="Zerbe P."/>
        </authorList>
    </citation>
    <scope>NUCLEOTIDE SEQUENCE [MRNA]</scope>
    <scope>FUNCTION</scope>
    <scope>PATHWAY</scope>
    <scope>CATALYTIC ACTIVITY</scope>
    <scope>TISSUE SPECIFICITY</scope>
</reference>
<evidence type="ECO:0000250" key="1">
    <source>
        <dbReference type="UniProtKB" id="Q40577"/>
    </source>
</evidence>
<evidence type="ECO:0000269" key="2">
    <source>
    </source>
</evidence>
<evidence type="ECO:0000269" key="3">
    <source>
    </source>
</evidence>
<evidence type="ECO:0000303" key="4">
    <source>
    </source>
</evidence>
<evidence type="ECO:0000303" key="5">
    <source>
    </source>
</evidence>
<evidence type="ECO:0000305" key="6"/>
<dbReference type="EC" id="4.2.3.183" evidence="3"/>
<dbReference type="EC" id="4.2.3.131" evidence="2"/>
<dbReference type="EMBL" id="KU180506">
    <property type="protein sequence ID" value="APJ36378.2"/>
    <property type="molecule type" value="mRNA"/>
</dbReference>
<dbReference type="EMBL" id="KX831650">
    <property type="protein sequence ID" value="ARO38140.1"/>
    <property type="molecule type" value="mRNA"/>
</dbReference>
<dbReference type="SMR" id="A0A1X9ISH5"/>
<dbReference type="KEGG" id="ag:ARO38140"/>
<dbReference type="BRENDA" id="4.2.3.183">
    <property type="organism ID" value="15342"/>
</dbReference>
<dbReference type="UniPathway" id="UPA00213"/>
<dbReference type="GO" id="GO:0009507">
    <property type="term" value="C:chloroplast"/>
    <property type="evidence" value="ECO:0007669"/>
    <property type="project" value="TreeGrafter"/>
</dbReference>
<dbReference type="GO" id="GO:0000287">
    <property type="term" value="F:magnesium ion binding"/>
    <property type="evidence" value="ECO:0007669"/>
    <property type="project" value="InterPro"/>
</dbReference>
<dbReference type="GO" id="GO:0062205">
    <property type="term" value="F:miltiradiene synthase activity"/>
    <property type="evidence" value="ECO:0000314"/>
    <property type="project" value="UniProtKB"/>
</dbReference>
<dbReference type="GO" id="GO:0010333">
    <property type="term" value="F:terpene synthase activity"/>
    <property type="evidence" value="ECO:0007669"/>
    <property type="project" value="InterPro"/>
</dbReference>
<dbReference type="GO" id="GO:0009686">
    <property type="term" value="P:gibberellin biosynthetic process"/>
    <property type="evidence" value="ECO:0007669"/>
    <property type="project" value="TreeGrafter"/>
</dbReference>
<dbReference type="GO" id="GO:1901946">
    <property type="term" value="P:miltiradiene biosynthetic process"/>
    <property type="evidence" value="ECO:0000314"/>
    <property type="project" value="UniProtKB"/>
</dbReference>
<dbReference type="GO" id="GO:0016114">
    <property type="term" value="P:terpenoid biosynthetic process"/>
    <property type="evidence" value="ECO:0000314"/>
    <property type="project" value="UniProtKB"/>
</dbReference>
<dbReference type="FunFam" id="1.50.10.130:FF:000002">
    <property type="entry name" value="Ent-copalyl diphosphate synthase, chloroplastic"/>
    <property type="match status" value="1"/>
</dbReference>
<dbReference type="Gene3D" id="1.50.10.160">
    <property type="match status" value="1"/>
</dbReference>
<dbReference type="Gene3D" id="1.10.600.10">
    <property type="entry name" value="Farnesyl Diphosphate Synthase"/>
    <property type="match status" value="1"/>
</dbReference>
<dbReference type="Gene3D" id="1.50.10.130">
    <property type="entry name" value="Terpene synthase, N-terminal domain"/>
    <property type="match status" value="1"/>
</dbReference>
<dbReference type="InterPro" id="IPR008949">
    <property type="entry name" value="Isoprenoid_synthase_dom_sf"/>
</dbReference>
<dbReference type="InterPro" id="IPR001906">
    <property type="entry name" value="Terpene_synth_N"/>
</dbReference>
<dbReference type="InterPro" id="IPR036965">
    <property type="entry name" value="Terpene_synth_N_sf"/>
</dbReference>
<dbReference type="InterPro" id="IPR050148">
    <property type="entry name" value="Terpene_synthase-like"/>
</dbReference>
<dbReference type="InterPro" id="IPR005630">
    <property type="entry name" value="Terpene_synthase_metal-bd"/>
</dbReference>
<dbReference type="InterPro" id="IPR008930">
    <property type="entry name" value="Terpenoid_cyclase/PrenylTrfase"/>
</dbReference>
<dbReference type="PANTHER" id="PTHR31739:SF33">
    <property type="entry name" value="CIS-ABIENOL SYNTHASE, CHLOROPLASTIC"/>
    <property type="match status" value="1"/>
</dbReference>
<dbReference type="PANTHER" id="PTHR31739">
    <property type="entry name" value="ENT-COPALYL DIPHOSPHATE SYNTHASE, CHLOROPLASTIC"/>
    <property type="match status" value="1"/>
</dbReference>
<dbReference type="Pfam" id="PF01397">
    <property type="entry name" value="Terpene_synth"/>
    <property type="match status" value="1"/>
</dbReference>
<dbReference type="Pfam" id="PF03936">
    <property type="entry name" value="Terpene_synth_C"/>
    <property type="match status" value="1"/>
</dbReference>
<dbReference type="SFLD" id="SFLDG01014">
    <property type="entry name" value="Terpene_Cyclase_Like_1_N-term"/>
    <property type="match status" value="1"/>
</dbReference>
<dbReference type="SUPFAM" id="SSF48239">
    <property type="entry name" value="Terpenoid cyclases/Protein prenyltransferases"/>
    <property type="match status" value="2"/>
</dbReference>
<dbReference type="SUPFAM" id="SSF48576">
    <property type="entry name" value="Terpenoid synthases"/>
    <property type="match status" value="1"/>
</dbReference>